<accession>Q740T9</accession>
<keyword id="KW-0349">Heme</keyword>
<keyword id="KW-0408">Iron</keyword>
<keyword id="KW-0479">Metal-binding</keyword>
<keyword id="KW-0561">Oxygen transport</keyword>
<keyword id="KW-1185">Reference proteome</keyword>
<keyword id="KW-0813">Transport</keyword>
<dbReference type="EMBL" id="AE016958">
    <property type="protein sequence ID" value="AAS03570.1"/>
    <property type="molecule type" value="Genomic_DNA"/>
</dbReference>
<dbReference type="RefSeq" id="WP_010949133.1">
    <property type="nucleotide sequence ID" value="NZ_CP106873.1"/>
</dbReference>
<dbReference type="SMR" id="Q740T9"/>
<dbReference type="STRING" id="262316.MAP_1253c"/>
<dbReference type="KEGG" id="mpa:MAP_1253c"/>
<dbReference type="PATRIC" id="fig|262316.17.peg.1317"/>
<dbReference type="eggNOG" id="COG2346">
    <property type="taxonomic scope" value="Bacteria"/>
</dbReference>
<dbReference type="HOGENOM" id="CLU_103526_2_1_11"/>
<dbReference type="Proteomes" id="UP000000580">
    <property type="component" value="Chromosome"/>
</dbReference>
<dbReference type="GO" id="GO:0020037">
    <property type="term" value="F:heme binding"/>
    <property type="evidence" value="ECO:0007669"/>
    <property type="project" value="InterPro"/>
</dbReference>
<dbReference type="GO" id="GO:0046872">
    <property type="term" value="F:metal ion binding"/>
    <property type="evidence" value="ECO:0007669"/>
    <property type="project" value="UniProtKB-KW"/>
</dbReference>
<dbReference type="GO" id="GO:0019825">
    <property type="term" value="F:oxygen binding"/>
    <property type="evidence" value="ECO:0007669"/>
    <property type="project" value="InterPro"/>
</dbReference>
<dbReference type="GO" id="GO:0005344">
    <property type="term" value="F:oxygen carrier activity"/>
    <property type="evidence" value="ECO:0007669"/>
    <property type="project" value="UniProtKB-KW"/>
</dbReference>
<dbReference type="CDD" id="cd00454">
    <property type="entry name" value="TrHb1_N"/>
    <property type="match status" value="1"/>
</dbReference>
<dbReference type="FunFam" id="1.10.490.10:FF:000010">
    <property type="entry name" value="Group 1 truncated hemoglobin"/>
    <property type="match status" value="1"/>
</dbReference>
<dbReference type="Gene3D" id="1.10.490.10">
    <property type="entry name" value="Globins"/>
    <property type="match status" value="1"/>
</dbReference>
<dbReference type="InterPro" id="IPR009050">
    <property type="entry name" value="Globin-like_sf"/>
</dbReference>
<dbReference type="InterPro" id="IPR012292">
    <property type="entry name" value="Globin/Proto"/>
</dbReference>
<dbReference type="InterPro" id="IPR019795">
    <property type="entry name" value="Globin_bac-like_CS"/>
</dbReference>
<dbReference type="InterPro" id="IPR001486">
    <property type="entry name" value="Hemoglobin_trunc"/>
</dbReference>
<dbReference type="InterPro" id="IPR016339">
    <property type="entry name" value="Hemoglobin_trunc_I"/>
</dbReference>
<dbReference type="Pfam" id="PF01152">
    <property type="entry name" value="Bac_globin"/>
    <property type="match status" value="1"/>
</dbReference>
<dbReference type="PIRSF" id="PIRSF002030">
    <property type="entry name" value="Globin_Protozoa/Cyanobacteria"/>
    <property type="match status" value="1"/>
</dbReference>
<dbReference type="SUPFAM" id="SSF46458">
    <property type="entry name" value="Globin-like"/>
    <property type="match status" value="1"/>
</dbReference>
<dbReference type="PROSITE" id="PS01213">
    <property type="entry name" value="GLOBIN_FAM_2"/>
    <property type="match status" value="1"/>
</dbReference>
<reference key="1">
    <citation type="journal article" date="2005" name="Proc. Natl. Acad. Sci. U.S.A.">
        <title>The complete genome sequence of Mycobacterium avium subspecies paratuberculosis.</title>
        <authorList>
            <person name="Li L."/>
            <person name="Bannantine J.P."/>
            <person name="Zhang Q."/>
            <person name="Amonsin A."/>
            <person name="May B.J."/>
            <person name="Alt D."/>
            <person name="Banerji N."/>
            <person name="Kanjilal S."/>
            <person name="Kapur V."/>
        </authorList>
    </citation>
    <scope>NUCLEOTIDE SEQUENCE [LARGE SCALE GENOMIC DNA]</scope>
    <source>
        <strain>ATCC BAA-968 / K-10</strain>
    </source>
</reference>
<sequence>MKILARFRKAEPASIYDRIGGHEALEVVVENFYVRVLADEQLSGFFTGTNMNRLKGKQVEFFAAALGGPHPYTGAPMKQVHQGRGITMHHFGLVAGHLADALTAAGVPSETVSEILGAIAPLAPEIATGEAGKVTV</sequence>
<gene>
    <name type="primary">glbN</name>
    <name type="ordered locus">MAP_1253c</name>
</gene>
<protein>
    <recommendedName>
        <fullName>Group 1 truncated hemoglobin GlbN</fullName>
        <shortName>Truncated hemoglobin</shortName>
        <shortName>trHbN</shortName>
    </recommendedName>
    <alternativeName>
        <fullName>Hemoglobin-like protein HbN</fullName>
    </alternativeName>
</protein>
<comment type="function">
    <text evidence="1">Binds oxygen cooperatively with very high affinity because of a fast combination and a slow dissociation rate.</text>
</comment>
<comment type="cofactor">
    <cofactor evidence="1">
        <name>heme</name>
        <dbReference type="ChEBI" id="CHEBI:30413"/>
    </cofactor>
    <text evidence="1">Binds 1 heme group per subunit.</text>
</comment>
<comment type="subunit">
    <text evidence="1">Homodimer.</text>
</comment>
<comment type="similarity">
    <text evidence="3">Belongs to the truncated hemoglobin family. Group I subfamily.</text>
</comment>
<name>TRHBN_MYCPA</name>
<organism>
    <name type="scientific">Mycolicibacterium paratuberculosis (strain ATCC BAA-968 / K-10)</name>
    <name type="common">Mycobacterium paratuberculosis</name>
    <dbReference type="NCBI Taxonomy" id="262316"/>
    <lineage>
        <taxon>Bacteria</taxon>
        <taxon>Bacillati</taxon>
        <taxon>Actinomycetota</taxon>
        <taxon>Actinomycetes</taxon>
        <taxon>Mycobacteriales</taxon>
        <taxon>Mycobacteriaceae</taxon>
        <taxon>Mycobacterium</taxon>
        <taxon>Mycobacterium avium complex (MAC)</taxon>
    </lineage>
</organism>
<proteinExistence type="inferred from homology"/>
<evidence type="ECO:0000250" key="1"/>
<evidence type="ECO:0000255" key="2"/>
<evidence type="ECO:0000305" key="3"/>
<feature type="chain" id="PRO_0000162638" description="Group 1 truncated hemoglobin GlbN">
    <location>
        <begin position="1"/>
        <end position="136"/>
    </location>
</feature>
<feature type="binding site" description="proximal binding residue" evidence="2">
    <location>
        <position position="81"/>
    </location>
    <ligand>
        <name>heme</name>
        <dbReference type="ChEBI" id="CHEBI:30413"/>
    </ligand>
    <ligandPart>
        <name>Fe</name>
        <dbReference type="ChEBI" id="CHEBI:18248"/>
    </ligandPart>
</feature>